<keyword id="KW-0007">Acetylation</keyword>
<keyword id="KW-0024">Alternative initiation</keyword>
<keyword id="KW-0025">Alternative splicing</keyword>
<keyword id="KW-1166">Caveolin-mediated endocytosis of virus by host</keyword>
<keyword id="KW-1170">Fusion of virus membrane with host endosomal membrane</keyword>
<keyword id="KW-1168">Fusion of virus membrane with host membrane</keyword>
<keyword id="KW-0325">Glycoprotein</keyword>
<keyword id="KW-0945">Host-virus interaction</keyword>
<keyword id="KW-0449">Lipoprotein</keyword>
<keyword id="KW-0472">Membrane</keyword>
<keyword id="KW-0519">Myristate</keyword>
<keyword id="KW-0812">Transmembrane</keyword>
<keyword id="KW-1133">Transmembrane helix</keyword>
<keyword id="KW-1161">Viral attachment to host cell</keyword>
<keyword id="KW-0261">Viral envelope protein</keyword>
<keyword id="KW-1162">Viral penetration into host cytoplasm</keyword>
<keyword id="KW-0946">Virion</keyword>
<keyword id="KW-1164">Virus endocytosis by host</keyword>
<keyword id="KW-1160">Virus entry into host cell</keyword>
<proteinExistence type="evidence at protein level"/>
<evidence type="ECO:0000250" key="1">
    <source>
        <dbReference type="UniProtKB" id="P03138"/>
    </source>
</evidence>
<evidence type="ECO:0000250" key="2">
    <source>
        <dbReference type="UniProtKB" id="P03141"/>
    </source>
</evidence>
<evidence type="ECO:0000255" key="3">
    <source>
        <dbReference type="HAMAP-Rule" id="MF_04075"/>
    </source>
</evidence>
<evidence type="ECO:0000256" key="4">
    <source>
        <dbReference type="SAM" id="MobiDB-lite"/>
    </source>
</evidence>
<evidence type="ECO:0000305" key="5"/>
<gene>
    <name evidence="3" type="primary">S</name>
</gene>
<name>HBSAG_HBVH3</name>
<sequence length="400" mass="43729">MGAPLSTARRGMGQNLSVPNPLGFFPDHQLDPLFRANSSSPDWDFNTNKDNWPMANKVGVGGFGPGFTPPHGGLLGWSPQAQGILTTSPPDPPPASTNRRSGRKPTPVSPPLRDTHPQAMQWNSTQFHQALLDPRVRGLYLPAGGSSSETQNPVPTIASLTSSIFSKTGDPAMNMENITSGLLGPLLVLQAVCFLLTKILTIPQSLDSWWTSLNFLGVPPGCPGQNSQSPISNHLPTSCPPTCPGYRWMCLRRFIIFLFILLLCLIFLLVLLDYQGMLPVCPLLPGSTTTSTGPCKTCTTLAQGTSMFPSCCCTKPSDGNCTCIPIPSSWAFGKYLWEWASARFSWLSLLVQFVQWCVGLSPTVWLLVIWMIWYWGPNLCSILSPFIPLLPIFCYLWASI</sequence>
<organism>
    <name type="scientific">Hepatitis B virus genotype H subtype adw4 (isolate Nicaragua/2928Nic/1997)</name>
    <name type="common">HBV-H</name>
    <dbReference type="NCBI Taxonomy" id="489541"/>
    <lineage>
        <taxon>Viruses</taxon>
        <taxon>Riboviria</taxon>
        <taxon>Pararnavirae</taxon>
        <taxon>Artverviricota</taxon>
        <taxon>Revtraviricetes</taxon>
        <taxon>Blubervirales</taxon>
        <taxon>Hepadnaviridae</taxon>
        <taxon>Orthohepadnavirus</taxon>
        <taxon>Hepatitis B virus</taxon>
        <taxon>hepatitis B virus genotype H</taxon>
    </lineage>
</organism>
<accession>Q8JMZ6</accession>
<dbReference type="EMBL" id="AY090457">
    <property type="protein sequence ID" value="AAM09052.1"/>
    <property type="molecule type" value="Genomic_DNA"/>
</dbReference>
<dbReference type="PIR" id="JQ2119">
    <property type="entry name" value="JQ2119"/>
</dbReference>
<dbReference type="PIR" id="JQ2120">
    <property type="entry name" value="JQ2120"/>
</dbReference>
<dbReference type="PIR" id="JQ2121">
    <property type="entry name" value="JQ2121"/>
</dbReference>
<dbReference type="PIR" id="JQ2122">
    <property type="entry name" value="JQ2122"/>
</dbReference>
<dbReference type="SMR" id="Q8JMZ6"/>
<dbReference type="GlyCosmos" id="Q8JMZ6">
    <property type="glycosylation" value="2 sites, No reported glycans"/>
</dbReference>
<dbReference type="Proteomes" id="UP000007409">
    <property type="component" value="Segment"/>
</dbReference>
<dbReference type="GO" id="GO:0016020">
    <property type="term" value="C:membrane"/>
    <property type="evidence" value="ECO:0007669"/>
    <property type="project" value="UniProtKB-UniRule"/>
</dbReference>
<dbReference type="GO" id="GO:0019031">
    <property type="term" value="C:viral envelope"/>
    <property type="evidence" value="ECO:0007669"/>
    <property type="project" value="UniProtKB-KW"/>
</dbReference>
<dbReference type="GO" id="GO:0055036">
    <property type="term" value="C:virion membrane"/>
    <property type="evidence" value="ECO:0007669"/>
    <property type="project" value="UniProtKB-SubCell"/>
</dbReference>
<dbReference type="GO" id="GO:0075513">
    <property type="term" value="P:caveolin-mediated endocytosis of virus by host cell"/>
    <property type="evidence" value="ECO:0007669"/>
    <property type="project" value="UniProtKB-KW"/>
</dbReference>
<dbReference type="GO" id="GO:0039654">
    <property type="term" value="P:fusion of virus membrane with host endosome membrane"/>
    <property type="evidence" value="ECO:0007669"/>
    <property type="project" value="UniProtKB-KW"/>
</dbReference>
<dbReference type="GO" id="GO:0019062">
    <property type="term" value="P:virion attachment to host cell"/>
    <property type="evidence" value="ECO:0007669"/>
    <property type="project" value="UniProtKB-UniRule"/>
</dbReference>
<dbReference type="HAMAP" id="MF_04075">
    <property type="entry name" value="HBV_HBSAG"/>
    <property type="match status" value="1"/>
</dbReference>
<dbReference type="InterPro" id="IPR000349">
    <property type="entry name" value="HBV_HBSAG"/>
</dbReference>
<dbReference type="Pfam" id="PF00695">
    <property type="entry name" value="vMSA"/>
    <property type="match status" value="1"/>
</dbReference>
<protein>
    <recommendedName>
        <fullName evidence="3">Large envelope protein</fullName>
    </recommendedName>
    <alternativeName>
        <fullName evidence="3">L glycoprotein</fullName>
    </alternativeName>
    <alternativeName>
        <fullName evidence="3">L-HBsAg</fullName>
        <shortName evidence="3">LHB</shortName>
    </alternativeName>
    <alternativeName>
        <fullName evidence="3">Large S protein</fullName>
    </alternativeName>
    <alternativeName>
        <fullName evidence="3">Large surface protein</fullName>
    </alternativeName>
    <alternativeName>
        <fullName evidence="3">Major surface antigen</fullName>
    </alternativeName>
</protein>
<comment type="function">
    <text evidence="3">The large envelope protein exists in two topological conformations, one which is termed 'external' or Le-HBsAg and the other 'internal' or Li-HBsAg. In its external conformation the protein attaches the virus to cell receptors and thereby initiating infection. This interaction determines the species specificity and liver tropism. This attachment induces virion internalization predominantly through caveolin-mediated endocytosis. The large envelope protein also assures fusion between virion membrane and endosomal membrane. In its internal conformation the protein plays a role in virion morphogenesis and mediates the contact with the nucleocapsid like a matrix protein.</text>
</comment>
<comment type="function">
    <text evidence="3">The middle envelope protein plays an important role in the budding of the virion. It is involved in the induction of budding in a nucleocapsid independent way. In this process the majority of envelope proteins bud to form subviral lipoprotein particles of 22 nm of diameter that do not contain a nucleocapsid.</text>
</comment>
<comment type="subunit">
    <molecule>Isoform L</molecule>
    <text evidence="2">In its internal form (Li-HBsAg), interacts with the capsid protein and with the isoform S. Interacts with host chaperone CANX.</text>
</comment>
<comment type="subunit">
    <molecule>Isoform M</molecule>
    <text evidence="2">Associates with host chaperone CANX through its pre-S2 N glycan; this association may be essential for isoform M proper secretion.</text>
</comment>
<comment type="subunit">
    <molecule>Isoform S</molecule>
    <text evidence="2">Interacts with isoform L. Interacts with the antigens of satellite virus HDV (HDVAgs); this interaction is required for encapsidation of HDV genomic RNA.</text>
</comment>
<comment type="subcellular location">
    <subcellularLocation>
        <location evidence="3">Virion membrane</location>
    </subcellularLocation>
</comment>
<comment type="alternative products">
    <event type="alternative splicing"/>
    <event type="alternative initiation"/>
    <isoform>
        <id>Q8JMZ6-1</id>
        <name>L</name>
        <name>Large envelope protein</name>
        <name>LHB</name>
        <name>L-HBsAg</name>
        <sequence type="displayed"/>
    </isoform>
    <isoform>
        <id>Q8JMZ6-2</id>
        <name>M</name>
        <name>Middle envelope protein</name>
        <name>MHB</name>
        <name>M-HBsAg</name>
        <sequence type="described" ref="VSP_031434"/>
    </isoform>
    <isoform>
        <id>Q8JMZ6-3</id>
        <name>S</name>
        <name>Small envelope protein</name>
        <name>SHB</name>
        <name>S-HBsAg</name>
        <sequence type="described" ref="VSP_031433"/>
    </isoform>
</comment>
<comment type="domain">
    <text evidence="3">The large envelope protein is synthesized with the pre-S region at the cytosolic side of the endoplasmic reticulum and, hence will be within the virion after budding. Therefore the pre-S region is not N-glycosylated. Later a post-translational translocation of N-terminal pre-S and TM1 domains occur in about 50% of proteins at the virion surface. These molecules change their topology by an unknown mechanism, resulting in exposure of pre-S region at virion surface. For isoform M in contrast, the pre-S2 region is translocated cotranslationally to the endoplasmic reticulum lumen and is N-glycosylated.</text>
</comment>
<comment type="PTM">
    <text evidence="1 3">Isoform M is N-terminally acetylated by host at a ratio of 90%, and N-glycosylated by host at the pre-S2 region.</text>
</comment>
<comment type="PTM">
    <text evidence="3">Myristoylated.</text>
</comment>
<comment type="biotechnology">
    <text>Systematic vaccination of individuals at risk of exposure to the virus has been the main method of controlling the morbidity and mortality associated with hepatitis B. The first hepatitis B vaccine was manufactured by the purification and inactivation of HBsAg obtained from the plasma of chronic hepatitis B virus carriers. The vaccine is now produced by recombinant DNA techniques and expression of the S isoform in yeast cells. The pre-S region do not seem to induce strong enough antigenic response.</text>
</comment>
<comment type="similarity">
    <text evidence="3">Belongs to the orthohepadnavirus major surface antigen family.</text>
</comment>
<reference key="1">
    <citation type="journal article" date="2002" name="J. Gen. Virol.">
        <title>Genotype H: a new Amerindian genotype of hepatitis B virus revealed in Central America.</title>
        <authorList>
            <person name="Arauz-Ruiz P."/>
            <person name="Norder H."/>
            <person name="Robertson B.H."/>
            <person name="Magnius L.O."/>
        </authorList>
    </citation>
    <scope>NUCLEOTIDE SEQUENCE [GENOMIC DNA]</scope>
</reference>
<reference key="2">
    <citation type="journal article" date="1996" name="Intervirology">
        <title>Functions of the large hepatitis B virus surface protein in viral particle morphogenesis.</title>
        <authorList>
            <person name="Bruss V."/>
            <person name="Gerhardt E."/>
            <person name="Vieluf K."/>
            <person name="Wunderlich G."/>
        </authorList>
    </citation>
    <scope>REVIEW</scope>
</reference>
<reference key="3">
    <citation type="journal article" date="1998" name="Adv. Exp. Med. Biol.">
        <title>Role of glycan processing in hepatitis B virus envelope protein trafficking.</title>
        <authorList>
            <person name="Block T.M."/>
            <person name="Lu X."/>
            <person name="Mehta A."/>
            <person name="Park J."/>
            <person name="Blumberg B.S."/>
            <person name="Dwek R."/>
        </authorList>
    </citation>
    <scope>REVIEW</scope>
</reference>
<reference key="4">
    <citation type="journal article" date="2004" name="Virus Res.">
        <title>Envelopment of the hepatitis B virus nucleocapsid.</title>
        <authorList>
            <person name="Bruss V."/>
        </authorList>
    </citation>
    <scope>REVIEW</scope>
</reference>
<reference key="5">
    <citation type="journal article" date="2006" name="Cancer Sci.">
        <title>Hepatitis B virus pre-S mutants, endoplasmic reticulum stress and hepatocarcinogenesis.</title>
        <authorList>
            <person name="Wang H.C."/>
            <person name="Huang W."/>
            <person name="Lai M.D."/>
            <person name="Su I.J."/>
        </authorList>
    </citation>
    <scope>REVIEW</scope>
</reference>
<organismHost>
    <name type="scientific">Homo sapiens</name>
    <name type="common">Human</name>
    <dbReference type="NCBI Taxonomy" id="9606"/>
</organismHost>
<organismHost>
    <name type="scientific">Pan troglodytes</name>
    <name type="common">Chimpanzee</name>
    <dbReference type="NCBI Taxonomy" id="9598"/>
</organismHost>
<feature type="initiator methionine" description="Removed; by host" evidence="3">
    <location>
        <position position="1"/>
    </location>
</feature>
<feature type="chain" id="PRO_0000319098" description="Large envelope protein" evidence="3">
    <location>
        <begin position="2"/>
        <end position="400"/>
    </location>
</feature>
<feature type="topological domain" description="Intravirion; in internal conformation" evidence="3">
    <location>
        <begin position="2"/>
        <end position="253"/>
    </location>
</feature>
<feature type="topological domain" description="Virion surface; in external conformation" evidence="3">
    <location>
        <begin position="2"/>
        <end position="181"/>
    </location>
</feature>
<feature type="transmembrane region" description="Helical; Name=TM1; Note=In external conformation" evidence="3">
    <location>
        <begin position="182"/>
        <end position="202"/>
    </location>
</feature>
<feature type="topological domain" description="Intravirion; in external conformation" evidence="3">
    <location>
        <begin position="203"/>
        <end position="253"/>
    </location>
</feature>
<feature type="transmembrane region" description="Helical; Name=TM2" evidence="3">
    <location>
        <begin position="254"/>
        <end position="274"/>
    </location>
</feature>
<feature type="topological domain" description="Virion surface" evidence="3">
    <location>
        <begin position="275"/>
        <end position="348"/>
    </location>
</feature>
<feature type="transmembrane region" description="Helical" evidence="3">
    <location>
        <begin position="349"/>
        <end position="369"/>
    </location>
</feature>
<feature type="topological domain" description="Intravirion" evidence="3">
    <location>
        <begin position="370"/>
        <end position="375"/>
    </location>
</feature>
<feature type="transmembrane region" description="Helical; Name=TM3" evidence="3">
    <location>
        <begin position="376"/>
        <end position="398"/>
    </location>
</feature>
<feature type="topological domain" description="Virion surface" evidence="3">
    <location>
        <begin position="399"/>
        <end position="400"/>
    </location>
</feature>
<feature type="region of interest" description="Pre-S" evidence="3">
    <location>
        <begin position="2"/>
        <end position="174"/>
    </location>
</feature>
<feature type="region of interest" description="Pre-S1" evidence="3">
    <location>
        <begin position="2"/>
        <end position="119"/>
    </location>
</feature>
<feature type="region of interest" description="Disordered" evidence="4">
    <location>
        <begin position="70"/>
        <end position="115"/>
    </location>
</feature>
<feature type="region of interest" description="Pre-S2" evidence="3">
    <location>
        <begin position="120"/>
        <end position="174"/>
    </location>
</feature>
<feature type="compositionally biased region" description="Polar residues" evidence="4">
    <location>
        <begin position="79"/>
        <end position="88"/>
    </location>
</feature>
<feature type="lipid moiety-binding region" description="N-myristoyl glycine; by host" evidence="3">
    <location>
        <position position="2"/>
    </location>
</feature>
<feature type="glycosylation site" description="N-linked (GlcNAc...) asparagine; by host" evidence="3">
    <location>
        <position position="320"/>
    </location>
</feature>
<feature type="splice variant" id="VSP_031433" description="In isoform S." evidence="5">
    <location>
        <begin position="1"/>
        <end position="174"/>
    </location>
</feature>
<feature type="splice variant" id="VSP_031434" description="In isoform M." evidence="5">
    <location>
        <begin position="1"/>
        <end position="119"/>
    </location>
</feature>
<feature type="modified residue" description="N-acetylmethionine" evidence="5">
    <location sequence="Q8JMZ6-2">
        <position position="1"/>
    </location>
</feature>
<feature type="glycosylation site" description="N-linked (GlcNAc...) asparagine" evidence="5">
    <location sequence="Q8JMZ6-2">
        <position position="4"/>
    </location>
</feature>